<feature type="chain" id="PRO_1000015178" description="S-adenosylmethionine:tRNA ribosyltransferase-isomerase">
    <location>
        <begin position="1"/>
        <end position="342"/>
    </location>
</feature>
<organism>
    <name type="scientific">Bacillus velezensis (strain DSM 23117 / BGSC 10A6 / LMG 26770 / FZB42)</name>
    <name type="common">Bacillus amyloliquefaciens subsp. plantarum</name>
    <dbReference type="NCBI Taxonomy" id="326423"/>
    <lineage>
        <taxon>Bacteria</taxon>
        <taxon>Bacillati</taxon>
        <taxon>Bacillota</taxon>
        <taxon>Bacilli</taxon>
        <taxon>Bacillales</taxon>
        <taxon>Bacillaceae</taxon>
        <taxon>Bacillus</taxon>
        <taxon>Bacillus amyloliquefaciens group</taxon>
    </lineage>
</organism>
<protein>
    <recommendedName>
        <fullName evidence="1">S-adenosylmethionine:tRNA ribosyltransferase-isomerase</fullName>
        <ecNumber evidence="1">2.4.99.17</ecNumber>
    </recommendedName>
    <alternativeName>
        <fullName evidence="1">Queuosine biosynthesis protein QueA</fullName>
    </alternativeName>
</protein>
<comment type="function">
    <text evidence="1">Transfers and isomerizes the ribose moiety from AdoMet to the 7-aminomethyl group of 7-deazaguanine (preQ1-tRNA) to give epoxyqueuosine (oQ-tRNA).</text>
</comment>
<comment type="catalytic activity">
    <reaction evidence="1">
        <text>7-aminomethyl-7-carbaguanosine(34) in tRNA + S-adenosyl-L-methionine = epoxyqueuosine(34) in tRNA + adenine + L-methionine + 2 H(+)</text>
        <dbReference type="Rhea" id="RHEA:32155"/>
        <dbReference type="Rhea" id="RHEA-COMP:10342"/>
        <dbReference type="Rhea" id="RHEA-COMP:18582"/>
        <dbReference type="ChEBI" id="CHEBI:15378"/>
        <dbReference type="ChEBI" id="CHEBI:16708"/>
        <dbReference type="ChEBI" id="CHEBI:57844"/>
        <dbReference type="ChEBI" id="CHEBI:59789"/>
        <dbReference type="ChEBI" id="CHEBI:82833"/>
        <dbReference type="ChEBI" id="CHEBI:194443"/>
        <dbReference type="EC" id="2.4.99.17"/>
    </reaction>
</comment>
<comment type="pathway">
    <text evidence="1">tRNA modification; tRNA-queuosine biosynthesis.</text>
</comment>
<comment type="subunit">
    <text evidence="1">Monomer.</text>
</comment>
<comment type="subcellular location">
    <subcellularLocation>
        <location evidence="1">Cytoplasm</location>
    </subcellularLocation>
</comment>
<comment type="similarity">
    <text evidence="1">Belongs to the QueA family.</text>
</comment>
<proteinExistence type="inferred from homology"/>
<evidence type="ECO:0000255" key="1">
    <source>
        <dbReference type="HAMAP-Rule" id="MF_00113"/>
    </source>
</evidence>
<accession>A7Z767</accession>
<gene>
    <name evidence="1" type="primary">queA</name>
    <name type="ordered locus">RBAM_024830</name>
</gene>
<name>QUEA_BACVZ</name>
<reference key="1">
    <citation type="journal article" date="2007" name="Nat. Biotechnol.">
        <title>Comparative analysis of the complete genome sequence of the plant growth-promoting bacterium Bacillus amyloliquefaciens FZB42.</title>
        <authorList>
            <person name="Chen X.H."/>
            <person name="Koumoutsi A."/>
            <person name="Scholz R."/>
            <person name="Eisenreich A."/>
            <person name="Schneider K."/>
            <person name="Heinemeyer I."/>
            <person name="Morgenstern B."/>
            <person name="Voss B."/>
            <person name="Hess W.R."/>
            <person name="Reva O."/>
            <person name="Junge H."/>
            <person name="Voigt B."/>
            <person name="Jungblut P.R."/>
            <person name="Vater J."/>
            <person name="Suessmuth R."/>
            <person name="Liesegang H."/>
            <person name="Strittmatter A."/>
            <person name="Gottschalk G."/>
            <person name="Borriss R."/>
        </authorList>
    </citation>
    <scope>NUCLEOTIDE SEQUENCE [LARGE SCALE GENOMIC DNA]</scope>
    <source>
        <strain>DSM 23117 / BGSC 10A6 / LMG 26770 / FZB42</strain>
    </source>
</reference>
<sequence length="342" mass="38393">MKVDLFDFELPERLIAQVPLKERDASRLMVLDKQTGGLTDSSFKEIVSFFNEGDCLVLNNTRVLPARLFGTKEDTGAKVELLLLKQEENDTWETLVKPAKRVKKGTVLTFGDGRLTAVCTEELDHGGRKIEFRYDGIFYEVLESLGEMPLPPYIKEQLDDKERYQTVFSKEIGSAAAPTAGLHFTEEILDELKQKGVRIEFITLHVGLGTFRPVSADDVEEHNMHAEFYEMTEETAASLNEVRKAGGRIVSVGTTSTRTLETIAGEHDGEFTASSGWTSIFIYPGYEFKAIDGMITNFHLPKSSLIMLVSALAGREHVLSAYRHAVEEEYRFFSFGDAMLII</sequence>
<dbReference type="EC" id="2.4.99.17" evidence="1"/>
<dbReference type="EMBL" id="CP000560">
    <property type="protein sequence ID" value="ABS74843.1"/>
    <property type="molecule type" value="Genomic_DNA"/>
</dbReference>
<dbReference type="RefSeq" id="WP_012118092.1">
    <property type="nucleotide sequence ID" value="NC_009725.2"/>
</dbReference>
<dbReference type="SMR" id="A7Z767"/>
<dbReference type="GeneID" id="93081625"/>
<dbReference type="KEGG" id="bay:RBAM_024830"/>
<dbReference type="HOGENOM" id="CLU_039110_1_0_9"/>
<dbReference type="UniPathway" id="UPA00392"/>
<dbReference type="Proteomes" id="UP000001120">
    <property type="component" value="Chromosome"/>
</dbReference>
<dbReference type="GO" id="GO:0005737">
    <property type="term" value="C:cytoplasm"/>
    <property type="evidence" value="ECO:0007669"/>
    <property type="project" value="UniProtKB-SubCell"/>
</dbReference>
<dbReference type="GO" id="GO:0051075">
    <property type="term" value="F:S-adenosylmethionine:tRNA ribosyltransferase-isomerase activity"/>
    <property type="evidence" value="ECO:0007669"/>
    <property type="project" value="UniProtKB-EC"/>
</dbReference>
<dbReference type="GO" id="GO:0008616">
    <property type="term" value="P:queuosine biosynthetic process"/>
    <property type="evidence" value="ECO:0007669"/>
    <property type="project" value="UniProtKB-UniRule"/>
</dbReference>
<dbReference type="GO" id="GO:0002099">
    <property type="term" value="P:tRNA wobble guanine modification"/>
    <property type="evidence" value="ECO:0007669"/>
    <property type="project" value="TreeGrafter"/>
</dbReference>
<dbReference type="FunFam" id="2.40.10.240:FF:000002">
    <property type="entry name" value="S-adenosylmethionine:tRNA ribosyltransferase-isomerase"/>
    <property type="match status" value="1"/>
</dbReference>
<dbReference type="FunFam" id="3.40.1780.10:FF:000001">
    <property type="entry name" value="S-adenosylmethionine:tRNA ribosyltransferase-isomerase"/>
    <property type="match status" value="1"/>
</dbReference>
<dbReference type="Gene3D" id="2.40.10.240">
    <property type="entry name" value="QueA-like"/>
    <property type="match status" value="1"/>
</dbReference>
<dbReference type="Gene3D" id="3.40.1780.10">
    <property type="entry name" value="QueA-like"/>
    <property type="match status" value="1"/>
</dbReference>
<dbReference type="HAMAP" id="MF_00113">
    <property type="entry name" value="QueA"/>
    <property type="match status" value="1"/>
</dbReference>
<dbReference type="InterPro" id="IPR003699">
    <property type="entry name" value="QueA"/>
</dbReference>
<dbReference type="InterPro" id="IPR042118">
    <property type="entry name" value="QueA_dom1"/>
</dbReference>
<dbReference type="InterPro" id="IPR042119">
    <property type="entry name" value="QueA_dom2"/>
</dbReference>
<dbReference type="InterPro" id="IPR036100">
    <property type="entry name" value="QueA_sf"/>
</dbReference>
<dbReference type="NCBIfam" id="NF001140">
    <property type="entry name" value="PRK00147.1"/>
    <property type="match status" value="1"/>
</dbReference>
<dbReference type="NCBIfam" id="TIGR00113">
    <property type="entry name" value="queA"/>
    <property type="match status" value="1"/>
</dbReference>
<dbReference type="PANTHER" id="PTHR30307">
    <property type="entry name" value="S-ADENOSYLMETHIONINE:TRNA RIBOSYLTRANSFERASE-ISOMERASE"/>
    <property type="match status" value="1"/>
</dbReference>
<dbReference type="PANTHER" id="PTHR30307:SF0">
    <property type="entry name" value="S-ADENOSYLMETHIONINE:TRNA RIBOSYLTRANSFERASE-ISOMERASE"/>
    <property type="match status" value="1"/>
</dbReference>
<dbReference type="Pfam" id="PF02547">
    <property type="entry name" value="Queuosine_synth"/>
    <property type="match status" value="1"/>
</dbReference>
<dbReference type="SUPFAM" id="SSF111337">
    <property type="entry name" value="QueA-like"/>
    <property type="match status" value="1"/>
</dbReference>
<keyword id="KW-0963">Cytoplasm</keyword>
<keyword id="KW-0671">Queuosine biosynthesis</keyword>
<keyword id="KW-0949">S-adenosyl-L-methionine</keyword>
<keyword id="KW-0808">Transferase</keyword>